<protein>
    <recommendedName>
        <fullName evidence="1">CTP synthase</fullName>
        <ecNumber evidence="1">6.3.4.2</ecNumber>
    </recommendedName>
    <alternativeName>
        <fullName evidence="1">Cytidine 5'-triphosphate synthase</fullName>
    </alternativeName>
    <alternativeName>
        <fullName evidence="1">Cytidine triphosphate synthetase</fullName>
        <shortName evidence="1">CTP synthetase</shortName>
        <shortName evidence="1">CTPS</shortName>
    </alternativeName>
    <alternativeName>
        <fullName evidence="1">UTP--ammonia ligase</fullName>
    </alternativeName>
</protein>
<organism>
    <name type="scientific">Mycobacterium ulcerans (strain Agy99)</name>
    <dbReference type="NCBI Taxonomy" id="362242"/>
    <lineage>
        <taxon>Bacteria</taxon>
        <taxon>Bacillati</taxon>
        <taxon>Actinomycetota</taxon>
        <taxon>Actinomycetes</taxon>
        <taxon>Mycobacteriales</taxon>
        <taxon>Mycobacteriaceae</taxon>
        <taxon>Mycobacterium</taxon>
        <taxon>Mycobacterium ulcerans group</taxon>
    </lineage>
</organism>
<sequence>MRRHPQTATKHLFVSGGVASSLGKGLTASSLGQLLTARGLRVTMQKLDPYLNVDPGTMNPFQHGEVFVTEDGAETDLDVGHYERFLDRDLSGSANVTTGQVYSTVIAKERRGEYLGDTVQVIPHITDEIKRRIMAMAEPNADGRRPDVVITEIGGTVGDIESQPFLEAARQVRHDLGRENVFFLHVSLVPYLAPSGELKTKPTQHSVAALRSIGITPDALILRCDRDVPEALKNKIALMCDVDIDGIISTPAAPSIYDIPKVLHREELDAFVVRRLNLPFRDVDWTEWDDLLRRVHEPKETVRIALVGKYVELSDAYLSVIEAIRAGGFKHRAKVEISWVGSDDCQTDGGVASALGDVHGVLIPGGFGIRGIEGKISAISYARSRGLPVFGLCLGLQCIVIEAARSVGLTEANSAEFEPGTPDPVISTMADQEHIVSGQADLGGTMRLGAYPAVLESGSIVAEAYQSTKVSERHRHRYEVNNAYRERIAESGLRFSGTSPDGHLVEFVEYPPEQHPFVVGTQAHPELKSRPTRPHPLFAAFVKAAIDYKEGELLPVEMPERVSNGAERRDQVGQSIPEPANRG</sequence>
<feature type="chain" id="PRO_1000139500" description="CTP synthase">
    <location>
        <begin position="1"/>
        <end position="583"/>
    </location>
</feature>
<feature type="domain" description="Glutamine amidotransferase type-1" evidence="1">
    <location>
        <begin position="303"/>
        <end position="551"/>
    </location>
</feature>
<feature type="region of interest" description="Amidoligase domain" evidence="1">
    <location>
        <begin position="1"/>
        <end position="278"/>
    </location>
</feature>
<feature type="region of interest" description="Disordered" evidence="2">
    <location>
        <begin position="559"/>
        <end position="583"/>
    </location>
</feature>
<feature type="active site" description="Nucleophile; for glutamine hydrolysis" evidence="1">
    <location>
        <position position="393"/>
    </location>
</feature>
<feature type="active site" evidence="1">
    <location>
        <position position="524"/>
    </location>
</feature>
<feature type="active site" evidence="1">
    <location>
        <position position="526"/>
    </location>
</feature>
<feature type="binding site" evidence="1">
    <location>
        <position position="20"/>
    </location>
    <ligand>
        <name>CTP</name>
        <dbReference type="ChEBI" id="CHEBI:37563"/>
        <note>allosteric inhibitor</note>
    </ligand>
</feature>
<feature type="binding site" evidence="1">
    <location>
        <position position="20"/>
    </location>
    <ligand>
        <name>UTP</name>
        <dbReference type="ChEBI" id="CHEBI:46398"/>
    </ligand>
</feature>
<feature type="binding site" evidence="1">
    <location>
        <begin position="21"/>
        <end position="26"/>
    </location>
    <ligand>
        <name>ATP</name>
        <dbReference type="ChEBI" id="CHEBI:30616"/>
    </ligand>
</feature>
<feature type="binding site" evidence="1">
    <location>
        <position position="78"/>
    </location>
    <ligand>
        <name>ATP</name>
        <dbReference type="ChEBI" id="CHEBI:30616"/>
    </ligand>
</feature>
<feature type="binding site" evidence="1">
    <location>
        <position position="78"/>
    </location>
    <ligand>
        <name>Mg(2+)</name>
        <dbReference type="ChEBI" id="CHEBI:18420"/>
    </ligand>
</feature>
<feature type="binding site" evidence="1">
    <location>
        <position position="152"/>
    </location>
    <ligand>
        <name>Mg(2+)</name>
        <dbReference type="ChEBI" id="CHEBI:18420"/>
    </ligand>
</feature>
<feature type="binding site" evidence="1">
    <location>
        <begin position="159"/>
        <end position="161"/>
    </location>
    <ligand>
        <name>CTP</name>
        <dbReference type="ChEBI" id="CHEBI:37563"/>
        <note>allosteric inhibitor</note>
    </ligand>
</feature>
<feature type="binding site" evidence="1">
    <location>
        <begin position="199"/>
        <end position="204"/>
    </location>
    <ligand>
        <name>CTP</name>
        <dbReference type="ChEBI" id="CHEBI:37563"/>
        <note>allosteric inhibitor</note>
    </ligand>
</feature>
<feature type="binding site" evidence="1">
    <location>
        <begin position="199"/>
        <end position="204"/>
    </location>
    <ligand>
        <name>UTP</name>
        <dbReference type="ChEBI" id="CHEBI:46398"/>
    </ligand>
</feature>
<feature type="binding site" evidence="1">
    <location>
        <position position="235"/>
    </location>
    <ligand>
        <name>CTP</name>
        <dbReference type="ChEBI" id="CHEBI:37563"/>
        <note>allosteric inhibitor</note>
    </ligand>
</feature>
<feature type="binding site" evidence="1">
    <location>
        <position position="235"/>
    </location>
    <ligand>
        <name>UTP</name>
        <dbReference type="ChEBI" id="CHEBI:46398"/>
    </ligand>
</feature>
<feature type="binding site" evidence="1">
    <location>
        <position position="366"/>
    </location>
    <ligand>
        <name>L-glutamine</name>
        <dbReference type="ChEBI" id="CHEBI:58359"/>
    </ligand>
</feature>
<feature type="binding site" evidence="1">
    <location>
        <begin position="394"/>
        <end position="397"/>
    </location>
    <ligand>
        <name>L-glutamine</name>
        <dbReference type="ChEBI" id="CHEBI:58359"/>
    </ligand>
</feature>
<feature type="binding site" evidence="1">
    <location>
        <position position="416"/>
    </location>
    <ligand>
        <name>L-glutamine</name>
        <dbReference type="ChEBI" id="CHEBI:58359"/>
    </ligand>
</feature>
<feature type="binding site" evidence="1">
    <location>
        <position position="477"/>
    </location>
    <ligand>
        <name>L-glutamine</name>
        <dbReference type="ChEBI" id="CHEBI:58359"/>
    </ligand>
</feature>
<accession>A0PPA8</accession>
<comment type="function">
    <text evidence="1">Catalyzes the ATP-dependent amination of UTP to CTP with either L-glutamine or ammonia as the source of nitrogen. Regulates intracellular CTP levels through interactions with the four ribonucleotide triphosphates.</text>
</comment>
<comment type="catalytic activity">
    <reaction evidence="1">
        <text>UTP + L-glutamine + ATP + H2O = CTP + L-glutamate + ADP + phosphate + 2 H(+)</text>
        <dbReference type="Rhea" id="RHEA:26426"/>
        <dbReference type="ChEBI" id="CHEBI:15377"/>
        <dbReference type="ChEBI" id="CHEBI:15378"/>
        <dbReference type="ChEBI" id="CHEBI:29985"/>
        <dbReference type="ChEBI" id="CHEBI:30616"/>
        <dbReference type="ChEBI" id="CHEBI:37563"/>
        <dbReference type="ChEBI" id="CHEBI:43474"/>
        <dbReference type="ChEBI" id="CHEBI:46398"/>
        <dbReference type="ChEBI" id="CHEBI:58359"/>
        <dbReference type="ChEBI" id="CHEBI:456216"/>
        <dbReference type="EC" id="6.3.4.2"/>
    </reaction>
</comment>
<comment type="catalytic activity">
    <reaction evidence="1">
        <text>L-glutamine + H2O = L-glutamate + NH4(+)</text>
        <dbReference type="Rhea" id="RHEA:15889"/>
        <dbReference type="ChEBI" id="CHEBI:15377"/>
        <dbReference type="ChEBI" id="CHEBI:28938"/>
        <dbReference type="ChEBI" id="CHEBI:29985"/>
        <dbReference type="ChEBI" id="CHEBI:58359"/>
    </reaction>
</comment>
<comment type="catalytic activity">
    <reaction evidence="1">
        <text>UTP + NH4(+) + ATP = CTP + ADP + phosphate + 2 H(+)</text>
        <dbReference type="Rhea" id="RHEA:16597"/>
        <dbReference type="ChEBI" id="CHEBI:15378"/>
        <dbReference type="ChEBI" id="CHEBI:28938"/>
        <dbReference type="ChEBI" id="CHEBI:30616"/>
        <dbReference type="ChEBI" id="CHEBI:37563"/>
        <dbReference type="ChEBI" id="CHEBI:43474"/>
        <dbReference type="ChEBI" id="CHEBI:46398"/>
        <dbReference type="ChEBI" id="CHEBI:456216"/>
    </reaction>
</comment>
<comment type="activity regulation">
    <text evidence="1">Allosterically activated by GTP, when glutamine is the substrate; GTP has no effect on the reaction when ammonia is the substrate. The allosteric effector GTP functions by stabilizing the protein conformation that binds the tetrahedral intermediate(s) formed during glutamine hydrolysis. Inhibited by the product CTP, via allosteric rather than competitive inhibition.</text>
</comment>
<comment type="pathway">
    <text evidence="1">Pyrimidine metabolism; CTP biosynthesis via de novo pathway; CTP from UDP: step 2/2.</text>
</comment>
<comment type="subunit">
    <text evidence="1">Homotetramer.</text>
</comment>
<comment type="miscellaneous">
    <text evidence="1">CTPSs have evolved a hybrid strategy for distinguishing between UTP and CTP. The overlapping regions of the product feedback inhibitory and substrate sites recognize a common feature in both compounds, the triphosphate moiety. To differentiate isosteric substrate and product pyrimidine rings, an additional pocket far from the expected kinase/ligase catalytic site, specifically recognizes the cytosine and ribose portions of the product inhibitor.</text>
</comment>
<comment type="similarity">
    <text evidence="1">Belongs to the CTP synthase family.</text>
</comment>
<dbReference type="EC" id="6.3.4.2" evidence="1"/>
<dbReference type="EMBL" id="CP000325">
    <property type="protein sequence ID" value="ABL04177.1"/>
    <property type="molecule type" value="Genomic_DNA"/>
</dbReference>
<dbReference type="RefSeq" id="WP_011739797.1">
    <property type="nucleotide sequence ID" value="NC_008611.1"/>
</dbReference>
<dbReference type="SMR" id="A0PPA8"/>
<dbReference type="KEGG" id="mul:MUL_1688"/>
<dbReference type="eggNOG" id="COG0504">
    <property type="taxonomic scope" value="Bacteria"/>
</dbReference>
<dbReference type="HOGENOM" id="CLU_011675_5_0_11"/>
<dbReference type="UniPathway" id="UPA00159">
    <property type="reaction ID" value="UER00277"/>
</dbReference>
<dbReference type="Proteomes" id="UP000000765">
    <property type="component" value="Chromosome"/>
</dbReference>
<dbReference type="GO" id="GO:0005829">
    <property type="term" value="C:cytosol"/>
    <property type="evidence" value="ECO:0007669"/>
    <property type="project" value="TreeGrafter"/>
</dbReference>
<dbReference type="GO" id="GO:0005524">
    <property type="term" value="F:ATP binding"/>
    <property type="evidence" value="ECO:0007669"/>
    <property type="project" value="UniProtKB-KW"/>
</dbReference>
<dbReference type="GO" id="GO:0003883">
    <property type="term" value="F:CTP synthase activity"/>
    <property type="evidence" value="ECO:0007669"/>
    <property type="project" value="UniProtKB-UniRule"/>
</dbReference>
<dbReference type="GO" id="GO:0004359">
    <property type="term" value="F:glutaminase activity"/>
    <property type="evidence" value="ECO:0007669"/>
    <property type="project" value="RHEA"/>
</dbReference>
<dbReference type="GO" id="GO:0042802">
    <property type="term" value="F:identical protein binding"/>
    <property type="evidence" value="ECO:0007669"/>
    <property type="project" value="TreeGrafter"/>
</dbReference>
<dbReference type="GO" id="GO:0046872">
    <property type="term" value="F:metal ion binding"/>
    <property type="evidence" value="ECO:0007669"/>
    <property type="project" value="UniProtKB-KW"/>
</dbReference>
<dbReference type="GO" id="GO:0044210">
    <property type="term" value="P:'de novo' CTP biosynthetic process"/>
    <property type="evidence" value="ECO:0007669"/>
    <property type="project" value="UniProtKB-UniRule"/>
</dbReference>
<dbReference type="GO" id="GO:0019856">
    <property type="term" value="P:pyrimidine nucleobase biosynthetic process"/>
    <property type="evidence" value="ECO:0007669"/>
    <property type="project" value="TreeGrafter"/>
</dbReference>
<dbReference type="CDD" id="cd03113">
    <property type="entry name" value="CTPS_N"/>
    <property type="match status" value="1"/>
</dbReference>
<dbReference type="CDD" id="cd01746">
    <property type="entry name" value="GATase1_CTP_Synthase"/>
    <property type="match status" value="1"/>
</dbReference>
<dbReference type="FunFam" id="3.40.50.300:FF:000009">
    <property type="entry name" value="CTP synthase"/>
    <property type="match status" value="1"/>
</dbReference>
<dbReference type="FunFam" id="3.40.50.880:FF:000002">
    <property type="entry name" value="CTP synthase"/>
    <property type="match status" value="1"/>
</dbReference>
<dbReference type="Gene3D" id="3.40.50.880">
    <property type="match status" value="1"/>
</dbReference>
<dbReference type="Gene3D" id="3.40.50.300">
    <property type="entry name" value="P-loop containing nucleotide triphosphate hydrolases"/>
    <property type="match status" value="1"/>
</dbReference>
<dbReference type="HAMAP" id="MF_01227">
    <property type="entry name" value="PyrG"/>
    <property type="match status" value="1"/>
</dbReference>
<dbReference type="InterPro" id="IPR029062">
    <property type="entry name" value="Class_I_gatase-like"/>
</dbReference>
<dbReference type="InterPro" id="IPR004468">
    <property type="entry name" value="CTP_synthase"/>
</dbReference>
<dbReference type="InterPro" id="IPR017456">
    <property type="entry name" value="CTP_synthase_N"/>
</dbReference>
<dbReference type="InterPro" id="IPR017926">
    <property type="entry name" value="GATASE"/>
</dbReference>
<dbReference type="InterPro" id="IPR033828">
    <property type="entry name" value="GATase1_CTP_Synthase"/>
</dbReference>
<dbReference type="InterPro" id="IPR027417">
    <property type="entry name" value="P-loop_NTPase"/>
</dbReference>
<dbReference type="NCBIfam" id="NF003792">
    <property type="entry name" value="PRK05380.1"/>
    <property type="match status" value="1"/>
</dbReference>
<dbReference type="NCBIfam" id="TIGR00337">
    <property type="entry name" value="PyrG"/>
    <property type="match status" value="1"/>
</dbReference>
<dbReference type="PANTHER" id="PTHR11550">
    <property type="entry name" value="CTP SYNTHASE"/>
    <property type="match status" value="1"/>
</dbReference>
<dbReference type="PANTHER" id="PTHR11550:SF0">
    <property type="entry name" value="CTP SYNTHASE-RELATED"/>
    <property type="match status" value="1"/>
</dbReference>
<dbReference type="Pfam" id="PF06418">
    <property type="entry name" value="CTP_synth_N"/>
    <property type="match status" value="1"/>
</dbReference>
<dbReference type="Pfam" id="PF00117">
    <property type="entry name" value="GATase"/>
    <property type="match status" value="1"/>
</dbReference>
<dbReference type="SUPFAM" id="SSF52317">
    <property type="entry name" value="Class I glutamine amidotransferase-like"/>
    <property type="match status" value="1"/>
</dbReference>
<dbReference type="SUPFAM" id="SSF52540">
    <property type="entry name" value="P-loop containing nucleoside triphosphate hydrolases"/>
    <property type="match status" value="1"/>
</dbReference>
<dbReference type="PROSITE" id="PS51273">
    <property type="entry name" value="GATASE_TYPE_1"/>
    <property type="match status" value="1"/>
</dbReference>
<evidence type="ECO:0000255" key="1">
    <source>
        <dbReference type="HAMAP-Rule" id="MF_01227"/>
    </source>
</evidence>
<evidence type="ECO:0000256" key="2">
    <source>
        <dbReference type="SAM" id="MobiDB-lite"/>
    </source>
</evidence>
<proteinExistence type="inferred from homology"/>
<keyword id="KW-0067">ATP-binding</keyword>
<keyword id="KW-0315">Glutamine amidotransferase</keyword>
<keyword id="KW-0436">Ligase</keyword>
<keyword id="KW-0460">Magnesium</keyword>
<keyword id="KW-0479">Metal-binding</keyword>
<keyword id="KW-0547">Nucleotide-binding</keyword>
<keyword id="KW-0665">Pyrimidine biosynthesis</keyword>
<reference key="1">
    <citation type="journal article" date="2007" name="Genome Res.">
        <title>Reductive evolution and niche adaptation inferred from the genome of Mycobacterium ulcerans, the causative agent of Buruli ulcer.</title>
        <authorList>
            <person name="Stinear T.P."/>
            <person name="Seemann T."/>
            <person name="Pidot S."/>
            <person name="Frigui W."/>
            <person name="Reysset G."/>
            <person name="Garnier T."/>
            <person name="Meurice G."/>
            <person name="Simon D."/>
            <person name="Bouchier C."/>
            <person name="Ma L."/>
            <person name="Tichit M."/>
            <person name="Porter J.L."/>
            <person name="Ryan J."/>
            <person name="Johnson P.D.R."/>
            <person name="Davies J.K."/>
            <person name="Jenkin G.A."/>
            <person name="Small P.L.C."/>
            <person name="Jones L.M."/>
            <person name="Tekaia F."/>
            <person name="Laval F."/>
            <person name="Daffe M."/>
            <person name="Parkhill J."/>
            <person name="Cole S.T."/>
        </authorList>
    </citation>
    <scope>NUCLEOTIDE SEQUENCE [LARGE SCALE GENOMIC DNA]</scope>
    <source>
        <strain>Agy99</strain>
    </source>
</reference>
<name>PYRG_MYCUA</name>
<gene>
    <name evidence="1" type="primary">pyrG</name>
    <name type="ordered locus">MUL_1688</name>
</gene>